<feature type="signal peptide" evidence="2">
    <location>
        <begin position="1"/>
        <end position="19"/>
    </location>
</feature>
<feature type="propeptide" id="PRO_0000401871" evidence="1">
    <location>
        <begin position="20"/>
        <end position="54"/>
    </location>
</feature>
<feature type="chain" id="PRO_0000401872" description="U13-lycotoxin-Ls1f">
    <location>
        <begin position="55"/>
        <end position="120"/>
    </location>
</feature>
<feature type="domain" description="Agouti">
    <location>
        <begin position="56"/>
        <end position="95"/>
    </location>
</feature>
<feature type="disulfide bond" evidence="1">
    <location>
        <begin position="56"/>
        <end position="70"/>
    </location>
</feature>
<feature type="disulfide bond" evidence="1">
    <location>
        <begin position="63"/>
        <end position="76"/>
    </location>
</feature>
<feature type="disulfide bond" evidence="1">
    <location>
        <begin position="69"/>
        <end position="87"/>
    </location>
</feature>
<feature type="disulfide bond" evidence="1">
    <location>
        <begin position="78"/>
        <end position="85"/>
    </location>
</feature>
<sequence>MKILFVLISILYAVYRFSSEEDVDSAYLANELEPVEDINSEQYAALEPKEEQERSCAGMGQDCKDDCDCCLNIATCNCWFGRYFCSCTFGDYQTCLRKKGKCKRNRPQSCPRSNLNRKKG</sequence>
<keyword id="KW-1015">Disulfide bond</keyword>
<keyword id="KW-0960">Knottin</keyword>
<keyword id="KW-0964">Secreted</keyword>
<keyword id="KW-0732">Signal</keyword>
<keyword id="KW-0800">Toxin</keyword>
<proteinExistence type="evidence at transcript level"/>
<evidence type="ECO:0000250" key="1"/>
<evidence type="ECO:0000255" key="2"/>
<evidence type="ECO:0000305" key="3"/>
<reference key="1">
    <citation type="journal article" date="2010" name="Zoology">
        <title>Transcriptome analysis of the venom glands of the Chinese wolf spider Lycosa singoriensis.</title>
        <authorList>
            <person name="Zhang Y."/>
            <person name="Chen J."/>
            <person name="Tang X."/>
            <person name="Wang F."/>
            <person name="Jiang L."/>
            <person name="Xiong X."/>
            <person name="Wang M."/>
            <person name="Rong M."/>
            <person name="Liu Z."/>
            <person name="Liang S."/>
        </authorList>
    </citation>
    <scope>NUCLEOTIDE SEQUENCE [LARGE SCALE MRNA]</scope>
    <source>
        <tissue>Venom gland</tissue>
    </source>
</reference>
<comment type="subcellular location">
    <subcellularLocation>
        <location evidence="1">Secreted</location>
    </subcellularLocation>
</comment>
<comment type="tissue specificity">
    <text>Expressed by the venom gland.</text>
</comment>
<comment type="domain">
    <text evidence="1">The presence of a 'disulfide through disulfide kOR' structurally defines this protein as a knottin.</text>
</comment>
<comment type="PTM">
    <text evidence="3">Contains 6 disulfide bonds.</text>
</comment>
<comment type="similarity">
    <text evidence="3">Belongs to the neurotoxin 05 (agouti) family.</text>
</comment>
<name>TXD08_LYCSI</name>
<dbReference type="EMBL" id="EU926110">
    <property type="protein sequence ID" value="ACI41442.1"/>
    <property type="molecule type" value="mRNA"/>
</dbReference>
<dbReference type="EMBL" id="FM864114">
    <property type="protein sequence ID" value="CAS03711.1"/>
    <property type="molecule type" value="mRNA"/>
</dbReference>
<dbReference type="SMR" id="B6DD26"/>
<dbReference type="ArachnoServer" id="AS001048">
    <property type="toxin name" value="U13-lycotoxin-Ls1f"/>
</dbReference>
<dbReference type="GO" id="GO:0005576">
    <property type="term" value="C:extracellular region"/>
    <property type="evidence" value="ECO:0007669"/>
    <property type="project" value="UniProtKB-SubCell"/>
</dbReference>
<dbReference type="GO" id="GO:0090729">
    <property type="term" value="F:toxin activity"/>
    <property type="evidence" value="ECO:0007669"/>
    <property type="project" value="UniProtKB-KW"/>
</dbReference>
<protein>
    <recommendedName>
        <fullName>U13-lycotoxin-Ls1f</fullName>
    </recommendedName>
    <alternativeName>
        <fullName>Toxin-like structure LSTX-L8</fullName>
    </alternativeName>
</protein>
<organism>
    <name type="scientific">Lycosa singoriensis</name>
    <name type="common">Wolf spider</name>
    <name type="synonym">Aranea singoriensis</name>
    <dbReference type="NCBI Taxonomy" id="434756"/>
    <lineage>
        <taxon>Eukaryota</taxon>
        <taxon>Metazoa</taxon>
        <taxon>Ecdysozoa</taxon>
        <taxon>Arthropoda</taxon>
        <taxon>Chelicerata</taxon>
        <taxon>Arachnida</taxon>
        <taxon>Araneae</taxon>
        <taxon>Araneomorphae</taxon>
        <taxon>Entelegynae</taxon>
        <taxon>Lycosoidea</taxon>
        <taxon>Lycosidae</taxon>
        <taxon>Lycosa</taxon>
    </lineage>
</organism>
<accession>B6DD26</accession>